<name>T2M2_AERPE</name>
<keyword id="KW-0238">DNA-binding</keyword>
<keyword id="KW-0255">Endonuclease</keyword>
<keyword id="KW-0378">Hydrolase</keyword>
<keyword id="KW-0540">Nuclease</keyword>
<keyword id="KW-1185">Reference proteome</keyword>
<keyword id="KW-0680">Restriction system</keyword>
<sequence>MPVEVIPVLHNVSSVQRVVDMARLSYSLGLDTLVVTKAYGGAAQSGVPEAMRLALKLGKSLVVLPELRDAVNLLSPTHVLAVTPSRAERLVGPGGLEGLEGRVLVVFSGGEPELDPSEAAGAIRVYIEGVEGKVGPIAEAALILYFLLRGGGDGRG</sequence>
<gene>
    <name type="ordered locus">APE_2001.1</name>
</gene>
<dbReference type="EC" id="3.1.21.4" evidence="1"/>
<dbReference type="EMBL" id="BA000002">
    <property type="protein sequence ID" value="BAA81011.2"/>
    <property type="molecule type" value="Genomic_DNA"/>
</dbReference>
<dbReference type="PIR" id="C72503">
    <property type="entry name" value="C72503"/>
</dbReference>
<dbReference type="SMR" id="Q9YAD8"/>
<dbReference type="STRING" id="272557.APE_2001.1"/>
<dbReference type="EnsemblBacteria" id="BAA81011">
    <property type="protein sequence ID" value="BAA81011"/>
    <property type="gene ID" value="APE_2001.1"/>
</dbReference>
<dbReference type="KEGG" id="ape:APE_2001.1"/>
<dbReference type="PATRIC" id="fig|272557.25.peg.1335"/>
<dbReference type="eggNOG" id="arCOG01019">
    <property type="taxonomic scope" value="Archaea"/>
</dbReference>
<dbReference type="Proteomes" id="UP000002518">
    <property type="component" value="Chromosome"/>
</dbReference>
<dbReference type="GO" id="GO:0003677">
    <property type="term" value="F:DNA binding"/>
    <property type="evidence" value="ECO:0007669"/>
    <property type="project" value="UniProtKB-KW"/>
</dbReference>
<dbReference type="GO" id="GO:0004519">
    <property type="term" value="F:endonuclease activity"/>
    <property type="evidence" value="ECO:0007669"/>
    <property type="project" value="UniProtKB-KW"/>
</dbReference>
<dbReference type="GO" id="GO:0009307">
    <property type="term" value="P:DNA restriction-modification system"/>
    <property type="evidence" value="ECO:0007669"/>
    <property type="project" value="UniProtKB-KW"/>
</dbReference>
<dbReference type="InterPro" id="IPR018665">
    <property type="entry name" value="DUF2122_RecB-nuclease-rel"/>
</dbReference>
<dbReference type="Pfam" id="PF09895">
    <property type="entry name" value="DUF2122"/>
    <property type="match status" value="1"/>
</dbReference>
<evidence type="ECO:0000303" key="1">
    <source>
    </source>
</evidence>
<evidence type="ECO:0000305" key="2"/>
<organism>
    <name type="scientific">Aeropyrum pernix (strain ATCC 700893 / DSM 11879 / JCM 9820 / NBRC 100138 / K1)</name>
    <dbReference type="NCBI Taxonomy" id="272557"/>
    <lineage>
        <taxon>Archaea</taxon>
        <taxon>Thermoproteota</taxon>
        <taxon>Thermoprotei</taxon>
        <taxon>Desulfurococcales</taxon>
        <taxon>Desulfurococcaceae</taxon>
        <taxon>Aeropyrum</taxon>
    </lineage>
</organism>
<accession>Q9YAD8</accession>
<comment type="function">
    <text evidence="1">A putative type II restriction enzyme, its methylase would be APE_2002.</text>
</comment>
<comment type="catalytic activity">
    <reaction evidence="1">
        <text>Endonucleolytic cleavage of DNA to give specific double-stranded fragments with terminal 5'-phosphates.</text>
        <dbReference type="EC" id="3.1.21.4"/>
    </reaction>
</comment>
<comment type="similarity">
    <text evidence="2">To M.jannaschii MJ1199.</text>
</comment>
<reference key="1">
    <citation type="journal article" date="1999" name="DNA Res.">
        <title>Complete genome sequence of an aerobic hyper-thermophilic crenarchaeon, Aeropyrum pernix K1.</title>
        <authorList>
            <person name="Kawarabayasi Y."/>
            <person name="Hino Y."/>
            <person name="Horikawa H."/>
            <person name="Yamazaki S."/>
            <person name="Haikawa Y."/>
            <person name="Jin-no K."/>
            <person name="Takahashi M."/>
            <person name="Sekine M."/>
            <person name="Baba S."/>
            <person name="Ankai A."/>
            <person name="Kosugi H."/>
            <person name="Hosoyama A."/>
            <person name="Fukui S."/>
            <person name="Nagai Y."/>
            <person name="Nishijima K."/>
            <person name="Nakazawa H."/>
            <person name="Takamiya M."/>
            <person name="Masuda S."/>
            <person name="Funahashi T."/>
            <person name="Tanaka T."/>
            <person name="Kudoh Y."/>
            <person name="Yamazaki J."/>
            <person name="Kushida N."/>
            <person name="Oguchi A."/>
            <person name="Aoki K."/>
            <person name="Kubota K."/>
            <person name="Nakamura Y."/>
            <person name="Nomura N."/>
            <person name="Sako Y."/>
            <person name="Kikuchi H."/>
        </authorList>
    </citation>
    <scope>NUCLEOTIDE SEQUENCE [LARGE SCALE GENOMIC DNA]</scope>
    <source>
        <strain>ATCC 700893 / DSM 11879 / JCM 9820 / NBRC 100138 / K1</strain>
    </source>
</reference>
<reference key="2">
    <citation type="journal article" date="2003" name="Nucleic Acids Res.">
        <title>A nomenclature for restriction enzymes, DNA methyltransferases, homing endonucleases and their genes.</title>
        <authorList>
            <person name="Roberts R.J."/>
            <person name="Belfort M."/>
            <person name="Bestor T."/>
            <person name="Bhagwat A.S."/>
            <person name="Bickle T.A."/>
            <person name="Bitinaite J."/>
            <person name="Blumenthal R.M."/>
            <person name="Degtyarev S.K."/>
            <person name="Dryden D.T."/>
            <person name="Dybvig K."/>
            <person name="Firman K."/>
            <person name="Gromova E.S."/>
            <person name="Gumport R.I."/>
            <person name="Halford S.E."/>
            <person name="Hattman S."/>
            <person name="Heitman J."/>
            <person name="Hornby D.P."/>
            <person name="Janulaitis A."/>
            <person name="Jeltsch A."/>
            <person name="Josephsen J."/>
            <person name="Kiss A."/>
            <person name="Klaenhammer T.R."/>
            <person name="Kobayashi I."/>
            <person name="Kong H."/>
            <person name="Krueger D.H."/>
            <person name="Lacks S."/>
            <person name="Marinus M.G."/>
            <person name="Miyahara M."/>
            <person name="Morgan R.D."/>
            <person name="Murray N.E."/>
            <person name="Nagaraja V."/>
            <person name="Piekarowicz A."/>
            <person name="Pingoud A."/>
            <person name="Raleigh E."/>
            <person name="Rao D.N."/>
            <person name="Reich N."/>
            <person name="Repin V.E."/>
            <person name="Selker E.U."/>
            <person name="Shaw P.C."/>
            <person name="Stein D.C."/>
            <person name="Stoddard B.L."/>
            <person name="Szybalski W."/>
            <person name="Trautner T.A."/>
            <person name="Van Etten J.L."/>
            <person name="Vitor J.M."/>
            <person name="Wilson G.G."/>
            <person name="Xu S.Y."/>
        </authorList>
    </citation>
    <scope>NOMENCLATURE</scope>
</reference>
<protein>
    <recommendedName>
        <fullName evidence="1">Putative type II restriction enzyme ApeKORF2002P</fullName>
        <shortName evidence="1">ApeKORF2002P</shortName>
        <ecNumber evidence="1">3.1.21.4</ecNumber>
    </recommendedName>
</protein>
<feature type="chain" id="PRO_0000107213" description="Putative type II restriction enzyme ApeKORF2002P">
    <location>
        <begin position="1"/>
        <end position="156"/>
    </location>
</feature>
<proteinExistence type="predicted"/>